<accession>Q8KM01</accession>
<dbReference type="EC" id="4.4.1.21" evidence="1"/>
<dbReference type="EMBL" id="AJ457090">
    <property type="protein sequence ID" value="CAD29772.1"/>
    <property type="molecule type" value="Genomic_DNA"/>
</dbReference>
<dbReference type="EMBL" id="BX571863">
    <property type="protein sequence ID" value="CAE13547.1"/>
    <property type="molecule type" value="Genomic_DNA"/>
</dbReference>
<dbReference type="RefSeq" id="WP_011145577.1">
    <property type="nucleotide sequence ID" value="NC_005126.1"/>
</dbReference>
<dbReference type="SMR" id="Q8KM01"/>
<dbReference type="STRING" id="243265.plu1253"/>
<dbReference type="GeneID" id="48847527"/>
<dbReference type="KEGG" id="plu:plu1253"/>
<dbReference type="eggNOG" id="COG1854">
    <property type="taxonomic scope" value="Bacteria"/>
</dbReference>
<dbReference type="HOGENOM" id="CLU_107531_2_0_6"/>
<dbReference type="OrthoDB" id="9788129at2"/>
<dbReference type="Proteomes" id="UP000002514">
    <property type="component" value="Chromosome"/>
</dbReference>
<dbReference type="GO" id="GO:0005506">
    <property type="term" value="F:iron ion binding"/>
    <property type="evidence" value="ECO:0007669"/>
    <property type="project" value="InterPro"/>
</dbReference>
<dbReference type="GO" id="GO:0043768">
    <property type="term" value="F:S-ribosylhomocysteine lyase activity"/>
    <property type="evidence" value="ECO:0007669"/>
    <property type="project" value="UniProtKB-UniRule"/>
</dbReference>
<dbReference type="GO" id="GO:0009372">
    <property type="term" value="P:quorum sensing"/>
    <property type="evidence" value="ECO:0007669"/>
    <property type="project" value="UniProtKB-UniRule"/>
</dbReference>
<dbReference type="FunFam" id="3.30.1360.80:FF:000001">
    <property type="entry name" value="S-ribosylhomocysteine lyase"/>
    <property type="match status" value="1"/>
</dbReference>
<dbReference type="Gene3D" id="3.30.1360.80">
    <property type="entry name" value="S-ribosylhomocysteinase (LuxS)"/>
    <property type="match status" value="1"/>
</dbReference>
<dbReference type="HAMAP" id="MF_00091">
    <property type="entry name" value="LuxS"/>
    <property type="match status" value="1"/>
</dbReference>
<dbReference type="InterPro" id="IPR037005">
    <property type="entry name" value="LuxS_sf"/>
</dbReference>
<dbReference type="InterPro" id="IPR011249">
    <property type="entry name" value="Metalloenz_LuxS/M16"/>
</dbReference>
<dbReference type="InterPro" id="IPR003815">
    <property type="entry name" value="S-ribosylhomocysteinase"/>
</dbReference>
<dbReference type="NCBIfam" id="NF002602">
    <property type="entry name" value="PRK02260.1-2"/>
    <property type="match status" value="1"/>
</dbReference>
<dbReference type="PANTHER" id="PTHR35799">
    <property type="entry name" value="S-RIBOSYLHOMOCYSTEINE LYASE"/>
    <property type="match status" value="1"/>
</dbReference>
<dbReference type="PANTHER" id="PTHR35799:SF1">
    <property type="entry name" value="S-RIBOSYLHOMOCYSTEINE LYASE"/>
    <property type="match status" value="1"/>
</dbReference>
<dbReference type="Pfam" id="PF02664">
    <property type="entry name" value="LuxS"/>
    <property type="match status" value="1"/>
</dbReference>
<dbReference type="PIRSF" id="PIRSF006160">
    <property type="entry name" value="AI2"/>
    <property type="match status" value="1"/>
</dbReference>
<dbReference type="PRINTS" id="PR01487">
    <property type="entry name" value="LUXSPROTEIN"/>
</dbReference>
<dbReference type="SUPFAM" id="SSF63411">
    <property type="entry name" value="LuxS/MPP-like metallohydrolase"/>
    <property type="match status" value="1"/>
</dbReference>
<feature type="chain" id="PRO_0000172243" description="S-ribosylhomocysteine lyase">
    <location>
        <begin position="1"/>
        <end position="171"/>
    </location>
</feature>
<feature type="binding site" evidence="1">
    <location>
        <position position="54"/>
    </location>
    <ligand>
        <name>Fe cation</name>
        <dbReference type="ChEBI" id="CHEBI:24875"/>
    </ligand>
</feature>
<feature type="binding site" evidence="1">
    <location>
        <position position="58"/>
    </location>
    <ligand>
        <name>Fe cation</name>
        <dbReference type="ChEBI" id="CHEBI:24875"/>
    </ligand>
</feature>
<feature type="binding site" evidence="1">
    <location>
        <position position="128"/>
    </location>
    <ligand>
        <name>Fe cation</name>
        <dbReference type="ChEBI" id="CHEBI:24875"/>
    </ligand>
</feature>
<sequence length="171" mass="19180">MPLLDSFTVDHTRMNAPAVRVAKTMKTPHGDTITVFDLRFCIPNKQVMPEKGIHTLEHLFAGFMRNHLNGEGVEIIDISPMGCRTGFYMSLIGEPAEVRVADAWKAAMADVLKVKDQSQIPELNIYQCGTYHMHSLTEAQDIAHHILDSDVLVNKNDELALPEEKLTELKV</sequence>
<comment type="function">
    <text evidence="1">Involved in the synthesis of autoinducer 2 (AI-2) which is secreted by bacteria and is used to communicate both the cell density and the metabolic potential of the environment. The regulation of gene expression in response to changes in cell density is called quorum sensing. Catalyzes the transformation of S-ribosylhomocysteine (RHC) to homocysteine (HC) and 4,5-dihydroxy-2,3-pentadione (DPD).</text>
</comment>
<comment type="catalytic activity">
    <reaction evidence="1">
        <text>S-(5-deoxy-D-ribos-5-yl)-L-homocysteine = (S)-4,5-dihydroxypentane-2,3-dione + L-homocysteine</text>
        <dbReference type="Rhea" id="RHEA:17753"/>
        <dbReference type="ChEBI" id="CHEBI:29484"/>
        <dbReference type="ChEBI" id="CHEBI:58195"/>
        <dbReference type="ChEBI" id="CHEBI:58199"/>
        <dbReference type="EC" id="4.4.1.21"/>
    </reaction>
</comment>
<comment type="cofactor">
    <cofactor evidence="1">
        <name>Fe cation</name>
        <dbReference type="ChEBI" id="CHEBI:24875"/>
    </cofactor>
    <text evidence="1">Binds 1 Fe cation per subunit.</text>
</comment>
<comment type="subunit">
    <text evidence="1">Homodimer.</text>
</comment>
<comment type="similarity">
    <text evidence="1">Belongs to the LuxS family.</text>
</comment>
<protein>
    <recommendedName>
        <fullName evidence="1">S-ribosylhomocysteine lyase</fullName>
        <ecNumber evidence="1">4.4.1.21</ecNumber>
    </recommendedName>
    <alternativeName>
        <fullName evidence="1">AI-2 synthesis protein</fullName>
    </alternativeName>
    <alternativeName>
        <fullName evidence="1">Autoinducer-2 production protein LuxS</fullName>
    </alternativeName>
</protein>
<proteinExistence type="inferred from homology"/>
<organism>
    <name type="scientific">Photorhabdus laumondii subsp. laumondii (strain DSM 15139 / CIP 105565 / TT01)</name>
    <name type="common">Photorhabdus luminescens subsp. laumondii</name>
    <dbReference type="NCBI Taxonomy" id="243265"/>
    <lineage>
        <taxon>Bacteria</taxon>
        <taxon>Pseudomonadati</taxon>
        <taxon>Pseudomonadota</taxon>
        <taxon>Gammaproteobacteria</taxon>
        <taxon>Enterobacterales</taxon>
        <taxon>Morganellaceae</taxon>
        <taxon>Photorhabdus</taxon>
    </lineage>
</organism>
<evidence type="ECO:0000255" key="1">
    <source>
        <dbReference type="HAMAP-Rule" id="MF_00091"/>
    </source>
</evidence>
<reference key="1">
    <citation type="journal article" date="2002" name="Appl. Environ. Microbiol.">
        <title>Identification, characterization and regulation of a cluster of genes involved in carbapenem biosynthesis in Photorhabdus luminescens.</title>
        <authorList>
            <person name="Derzelle S."/>
            <person name="Duchaud E."/>
            <person name="Kunst F."/>
            <person name="Danchin A."/>
            <person name="Bertin P."/>
        </authorList>
    </citation>
    <scope>NUCLEOTIDE SEQUENCE [GENOMIC DNA]</scope>
    <source>
        <strain>DSM 15139 / CIP 105565 / TT01</strain>
    </source>
</reference>
<reference key="2">
    <citation type="journal article" date="2003" name="Nat. Biotechnol.">
        <title>The genome sequence of the entomopathogenic bacterium Photorhabdus luminescens.</title>
        <authorList>
            <person name="Duchaud E."/>
            <person name="Rusniok C."/>
            <person name="Frangeul L."/>
            <person name="Buchrieser C."/>
            <person name="Givaudan A."/>
            <person name="Taourit S."/>
            <person name="Bocs S."/>
            <person name="Boursaux-Eude C."/>
            <person name="Chandler M."/>
            <person name="Charles J.-F."/>
            <person name="Dassa E."/>
            <person name="Derose R."/>
            <person name="Derzelle S."/>
            <person name="Freyssinet G."/>
            <person name="Gaudriault S."/>
            <person name="Medigue C."/>
            <person name="Lanois A."/>
            <person name="Powell K."/>
            <person name="Siguier P."/>
            <person name="Vincent R."/>
            <person name="Wingate V."/>
            <person name="Zouine M."/>
            <person name="Glaser P."/>
            <person name="Boemare N."/>
            <person name="Danchin A."/>
            <person name="Kunst F."/>
        </authorList>
    </citation>
    <scope>NUCLEOTIDE SEQUENCE [LARGE SCALE GENOMIC DNA]</scope>
    <source>
        <strain>DSM 15139 / CIP 105565 / TT01</strain>
    </source>
</reference>
<name>LUXS_PHOLL</name>
<keyword id="KW-0071">Autoinducer synthesis</keyword>
<keyword id="KW-0408">Iron</keyword>
<keyword id="KW-0456">Lyase</keyword>
<keyword id="KW-0479">Metal-binding</keyword>
<keyword id="KW-0673">Quorum sensing</keyword>
<keyword id="KW-1185">Reference proteome</keyword>
<gene>
    <name evidence="1" type="primary">luxS</name>
    <name type="ordered locus">plu1253</name>
</gene>